<gene>
    <name evidence="1" type="primary">hisA</name>
    <name type="ordered locus">BPP4271</name>
</gene>
<sequence length="246" mass="26022">MLLIPAIDLKDGRCVRLRQGDLDDATVFSEDPAAMASHWLDLGARRLHLVDLNGAVAGKPKNEAPIKAILQAVGDDIPVQIGGGIRDLDTIERYLDAGISYVIIGTAAVKNPGFLQDACGAFPGQIIVGLDARDGKVATDGWSKLTRHDVLDLAKKFEDYGCEAIIYTDIGRDGMLSGVNVDATVRLAQHVRIPVFASGGIAGLSDIEALCAVEDDGVEGAILGRSIYEGALDFQAAQARADELAK</sequence>
<dbReference type="EC" id="5.3.1.16" evidence="1"/>
<dbReference type="EMBL" id="BX640436">
    <property type="protein sequence ID" value="CAE39550.1"/>
    <property type="status" value="ALT_INIT"/>
    <property type="molecule type" value="Genomic_DNA"/>
</dbReference>
<dbReference type="RefSeq" id="WP_010927224.1">
    <property type="nucleotide sequence ID" value="NC_002928.3"/>
</dbReference>
<dbReference type="SMR" id="Q7W2Y0"/>
<dbReference type="GeneID" id="93206068"/>
<dbReference type="KEGG" id="bpa:BPP4271"/>
<dbReference type="HOGENOM" id="CLU_048577_1_1_4"/>
<dbReference type="UniPathway" id="UPA00031">
    <property type="reaction ID" value="UER00009"/>
</dbReference>
<dbReference type="Proteomes" id="UP000001421">
    <property type="component" value="Chromosome"/>
</dbReference>
<dbReference type="GO" id="GO:0005737">
    <property type="term" value="C:cytoplasm"/>
    <property type="evidence" value="ECO:0007669"/>
    <property type="project" value="UniProtKB-SubCell"/>
</dbReference>
<dbReference type="GO" id="GO:0003949">
    <property type="term" value="F:1-(5-phosphoribosyl)-5-[(5-phosphoribosylamino)methylideneamino]imidazole-4-carboxamide isomerase activity"/>
    <property type="evidence" value="ECO:0007669"/>
    <property type="project" value="UniProtKB-UniRule"/>
</dbReference>
<dbReference type="GO" id="GO:0000105">
    <property type="term" value="P:L-histidine biosynthetic process"/>
    <property type="evidence" value="ECO:0007669"/>
    <property type="project" value="UniProtKB-UniRule"/>
</dbReference>
<dbReference type="GO" id="GO:0000162">
    <property type="term" value="P:L-tryptophan biosynthetic process"/>
    <property type="evidence" value="ECO:0007669"/>
    <property type="project" value="TreeGrafter"/>
</dbReference>
<dbReference type="CDD" id="cd04732">
    <property type="entry name" value="HisA"/>
    <property type="match status" value="1"/>
</dbReference>
<dbReference type="FunFam" id="3.20.20.70:FF:000009">
    <property type="entry name" value="1-(5-phosphoribosyl)-5-[(5-phosphoribosylamino)methylideneamino] imidazole-4-carboxamide isomerase"/>
    <property type="match status" value="1"/>
</dbReference>
<dbReference type="Gene3D" id="3.20.20.70">
    <property type="entry name" value="Aldolase class I"/>
    <property type="match status" value="1"/>
</dbReference>
<dbReference type="HAMAP" id="MF_01014">
    <property type="entry name" value="HisA"/>
    <property type="match status" value="1"/>
</dbReference>
<dbReference type="InterPro" id="IPR013785">
    <property type="entry name" value="Aldolase_TIM"/>
</dbReference>
<dbReference type="InterPro" id="IPR006062">
    <property type="entry name" value="His_biosynth"/>
</dbReference>
<dbReference type="InterPro" id="IPR006063">
    <property type="entry name" value="HisA_bact_arch"/>
</dbReference>
<dbReference type="InterPro" id="IPR044524">
    <property type="entry name" value="Isoase_HisA-like"/>
</dbReference>
<dbReference type="InterPro" id="IPR023016">
    <property type="entry name" value="Isoase_HisA-like_bact"/>
</dbReference>
<dbReference type="InterPro" id="IPR011060">
    <property type="entry name" value="RibuloseP-bd_barrel"/>
</dbReference>
<dbReference type="NCBIfam" id="TIGR00007">
    <property type="entry name" value="1-(5-phosphoribosyl)-5-[(5-phosphoribosylamino)methylideneamino]imidazole-4-carboxamide isomerase"/>
    <property type="match status" value="1"/>
</dbReference>
<dbReference type="PANTHER" id="PTHR43090">
    <property type="entry name" value="1-(5-PHOSPHORIBOSYL)-5-[(5-PHOSPHORIBOSYLAMINO)METHYLIDENEAMINO] IMIDAZOLE-4-CARBOXAMIDE ISOMERASE"/>
    <property type="match status" value="1"/>
</dbReference>
<dbReference type="PANTHER" id="PTHR43090:SF2">
    <property type="entry name" value="1-(5-PHOSPHORIBOSYL)-5-[(5-PHOSPHORIBOSYLAMINO)METHYLIDENEAMINO] IMIDAZOLE-4-CARBOXAMIDE ISOMERASE"/>
    <property type="match status" value="1"/>
</dbReference>
<dbReference type="Pfam" id="PF00977">
    <property type="entry name" value="His_biosynth"/>
    <property type="match status" value="1"/>
</dbReference>
<dbReference type="SUPFAM" id="SSF51366">
    <property type="entry name" value="Ribulose-phoshate binding barrel"/>
    <property type="match status" value="1"/>
</dbReference>
<protein>
    <recommendedName>
        <fullName evidence="1">1-(5-phosphoribosyl)-5-[(5-phosphoribosylamino)methylideneamino] imidazole-4-carboxamide isomerase</fullName>
        <ecNumber evidence="1">5.3.1.16</ecNumber>
    </recommendedName>
    <alternativeName>
        <fullName evidence="1">Phosphoribosylformimino-5-aminoimidazole carboxamide ribotide isomerase</fullName>
    </alternativeName>
</protein>
<comment type="catalytic activity">
    <reaction evidence="1">
        <text>1-(5-phospho-beta-D-ribosyl)-5-[(5-phospho-beta-D-ribosylamino)methylideneamino]imidazole-4-carboxamide = 5-[(5-phospho-1-deoxy-D-ribulos-1-ylimino)methylamino]-1-(5-phospho-beta-D-ribosyl)imidazole-4-carboxamide</text>
        <dbReference type="Rhea" id="RHEA:15469"/>
        <dbReference type="ChEBI" id="CHEBI:58435"/>
        <dbReference type="ChEBI" id="CHEBI:58525"/>
        <dbReference type="EC" id="5.3.1.16"/>
    </reaction>
</comment>
<comment type="pathway">
    <text evidence="1">Amino-acid biosynthesis; L-histidine biosynthesis; L-histidine from 5-phospho-alpha-D-ribose 1-diphosphate: step 4/9.</text>
</comment>
<comment type="subcellular location">
    <subcellularLocation>
        <location evidence="1">Cytoplasm</location>
    </subcellularLocation>
</comment>
<comment type="similarity">
    <text evidence="1">Belongs to the HisA/HisF family.</text>
</comment>
<comment type="sequence caution" evidence="2">
    <conflict type="erroneous initiation">
        <sequence resource="EMBL-CDS" id="CAE39550"/>
    </conflict>
</comment>
<feature type="chain" id="PRO_0000141982" description="1-(5-phosphoribosyl)-5-[(5-phosphoribosylamino)methylideneamino] imidazole-4-carboxamide isomerase">
    <location>
        <begin position="1"/>
        <end position="246"/>
    </location>
</feature>
<feature type="active site" description="Proton acceptor" evidence="1">
    <location>
        <position position="8"/>
    </location>
</feature>
<feature type="active site" description="Proton donor" evidence="1">
    <location>
        <position position="131"/>
    </location>
</feature>
<accession>Q7W2Y0</accession>
<reference key="1">
    <citation type="journal article" date="2003" name="Nat. Genet.">
        <title>Comparative analysis of the genome sequences of Bordetella pertussis, Bordetella parapertussis and Bordetella bronchiseptica.</title>
        <authorList>
            <person name="Parkhill J."/>
            <person name="Sebaihia M."/>
            <person name="Preston A."/>
            <person name="Murphy L.D."/>
            <person name="Thomson N.R."/>
            <person name="Harris D.E."/>
            <person name="Holden M.T.G."/>
            <person name="Churcher C.M."/>
            <person name="Bentley S.D."/>
            <person name="Mungall K.L."/>
            <person name="Cerdeno-Tarraga A.-M."/>
            <person name="Temple L."/>
            <person name="James K.D."/>
            <person name="Harris B."/>
            <person name="Quail M.A."/>
            <person name="Achtman M."/>
            <person name="Atkin R."/>
            <person name="Baker S."/>
            <person name="Basham D."/>
            <person name="Bason N."/>
            <person name="Cherevach I."/>
            <person name="Chillingworth T."/>
            <person name="Collins M."/>
            <person name="Cronin A."/>
            <person name="Davis P."/>
            <person name="Doggett J."/>
            <person name="Feltwell T."/>
            <person name="Goble A."/>
            <person name="Hamlin N."/>
            <person name="Hauser H."/>
            <person name="Holroyd S."/>
            <person name="Jagels K."/>
            <person name="Leather S."/>
            <person name="Moule S."/>
            <person name="Norberczak H."/>
            <person name="O'Neil S."/>
            <person name="Ormond D."/>
            <person name="Price C."/>
            <person name="Rabbinowitsch E."/>
            <person name="Rutter S."/>
            <person name="Sanders M."/>
            <person name="Saunders D."/>
            <person name="Seeger K."/>
            <person name="Sharp S."/>
            <person name="Simmonds M."/>
            <person name="Skelton J."/>
            <person name="Squares R."/>
            <person name="Squares S."/>
            <person name="Stevens K."/>
            <person name="Unwin L."/>
            <person name="Whitehead S."/>
            <person name="Barrell B.G."/>
            <person name="Maskell D.J."/>
        </authorList>
    </citation>
    <scope>NUCLEOTIDE SEQUENCE [LARGE SCALE GENOMIC DNA]</scope>
    <source>
        <strain>12822 / ATCC BAA-587 / NCTC 13253</strain>
    </source>
</reference>
<name>HIS4_BORPA</name>
<proteinExistence type="inferred from homology"/>
<keyword id="KW-0028">Amino-acid biosynthesis</keyword>
<keyword id="KW-0963">Cytoplasm</keyword>
<keyword id="KW-0368">Histidine biosynthesis</keyword>
<keyword id="KW-0413">Isomerase</keyword>
<evidence type="ECO:0000255" key="1">
    <source>
        <dbReference type="HAMAP-Rule" id="MF_01014"/>
    </source>
</evidence>
<evidence type="ECO:0000305" key="2"/>
<organism>
    <name type="scientific">Bordetella parapertussis (strain 12822 / ATCC BAA-587 / NCTC 13253)</name>
    <dbReference type="NCBI Taxonomy" id="257311"/>
    <lineage>
        <taxon>Bacteria</taxon>
        <taxon>Pseudomonadati</taxon>
        <taxon>Pseudomonadota</taxon>
        <taxon>Betaproteobacteria</taxon>
        <taxon>Burkholderiales</taxon>
        <taxon>Alcaligenaceae</taxon>
        <taxon>Bordetella</taxon>
    </lineage>
</organism>